<dbReference type="EC" id="1.1.1.130" evidence="1"/>
<dbReference type="EMBL" id="CP000468">
    <property type="protein sequence ID" value="ABJ03057.1"/>
    <property type="molecule type" value="Genomic_DNA"/>
</dbReference>
<dbReference type="SMR" id="A1AHB7"/>
<dbReference type="KEGG" id="ecv:APECO1_2875"/>
<dbReference type="HOGENOM" id="CLU_040452_4_0_6"/>
<dbReference type="Proteomes" id="UP000008216">
    <property type="component" value="Chromosome"/>
</dbReference>
<dbReference type="GO" id="GO:0005737">
    <property type="term" value="C:cytoplasm"/>
    <property type="evidence" value="ECO:0007669"/>
    <property type="project" value="UniProtKB-SubCell"/>
</dbReference>
<dbReference type="GO" id="GO:0047559">
    <property type="term" value="F:3-dehydro-L-gulonate 2-dehydrogenase activity"/>
    <property type="evidence" value="ECO:0007669"/>
    <property type="project" value="UniProtKB-UniRule"/>
</dbReference>
<dbReference type="GO" id="GO:0070403">
    <property type="term" value="F:NAD+ binding"/>
    <property type="evidence" value="ECO:0007669"/>
    <property type="project" value="InterPro"/>
</dbReference>
<dbReference type="Gene3D" id="1.10.1530.10">
    <property type="match status" value="1"/>
</dbReference>
<dbReference type="Gene3D" id="3.30.1370.60">
    <property type="entry name" value="Hypothetical oxidoreductase yiak, domain 2"/>
    <property type="match status" value="1"/>
</dbReference>
<dbReference type="Gene3D" id="3.30.60.50">
    <property type="entry name" value="Hypothetical oxidoreductase yiak, domain 3"/>
    <property type="match status" value="1"/>
</dbReference>
<dbReference type="HAMAP" id="MF_00820">
    <property type="entry name" value="Diketo_gul_reduc"/>
    <property type="match status" value="1"/>
</dbReference>
<dbReference type="InterPro" id="IPR023689">
    <property type="entry name" value="Diketo_gul_Rdtase"/>
</dbReference>
<dbReference type="InterPro" id="IPR043144">
    <property type="entry name" value="Mal/L-sulf/L-lact_DH-like_ah"/>
</dbReference>
<dbReference type="InterPro" id="IPR043143">
    <property type="entry name" value="Mal/L-sulf/L-lact_DH-like_NADP"/>
</dbReference>
<dbReference type="InterPro" id="IPR036111">
    <property type="entry name" value="Mal/L-sulfo/L-lacto_DH-like_sf"/>
</dbReference>
<dbReference type="InterPro" id="IPR003767">
    <property type="entry name" value="Malate/L-lactate_DH-like"/>
</dbReference>
<dbReference type="NCBIfam" id="NF009750">
    <property type="entry name" value="PRK13260.1"/>
    <property type="match status" value="1"/>
</dbReference>
<dbReference type="PANTHER" id="PTHR11091:SF3">
    <property type="entry name" value="2,3-DIKETO-L-GULONATE REDUCTASE"/>
    <property type="match status" value="1"/>
</dbReference>
<dbReference type="PANTHER" id="PTHR11091">
    <property type="entry name" value="OXIDOREDUCTASE-RELATED"/>
    <property type="match status" value="1"/>
</dbReference>
<dbReference type="Pfam" id="PF02615">
    <property type="entry name" value="Ldh_2"/>
    <property type="match status" value="1"/>
</dbReference>
<dbReference type="SUPFAM" id="SSF89733">
    <property type="entry name" value="L-sulfolactate dehydrogenase-like"/>
    <property type="match status" value="1"/>
</dbReference>
<comment type="function">
    <text evidence="1">Catalyzes the reduction of 2,3-diketo-L-gulonate in the presence of NADH, to form 3-keto-L-gulonate.</text>
</comment>
<comment type="catalytic activity">
    <reaction evidence="1">
        <text>3-dehydro-L-gulonate + NAD(+) = 2,3-dioxo-L-gulonate + NADH + H(+)</text>
        <dbReference type="Rhea" id="RHEA:21924"/>
        <dbReference type="ChEBI" id="CHEBI:15378"/>
        <dbReference type="ChEBI" id="CHEBI:57441"/>
        <dbReference type="ChEBI" id="CHEBI:57540"/>
        <dbReference type="ChEBI" id="CHEBI:57655"/>
        <dbReference type="ChEBI" id="CHEBI:57945"/>
        <dbReference type="EC" id="1.1.1.130"/>
    </reaction>
</comment>
<comment type="catalytic activity">
    <reaction evidence="1">
        <text>3-dehydro-L-gulonate + NADP(+) = 2,3-dioxo-L-gulonate + NADPH + H(+)</text>
        <dbReference type="Rhea" id="RHEA:21928"/>
        <dbReference type="ChEBI" id="CHEBI:15378"/>
        <dbReference type="ChEBI" id="CHEBI:57441"/>
        <dbReference type="ChEBI" id="CHEBI:57655"/>
        <dbReference type="ChEBI" id="CHEBI:57783"/>
        <dbReference type="ChEBI" id="CHEBI:58349"/>
        <dbReference type="EC" id="1.1.1.130"/>
    </reaction>
</comment>
<comment type="subunit">
    <text evidence="1">Homodimer.</text>
</comment>
<comment type="subcellular location">
    <subcellularLocation>
        <location evidence="1">Cytoplasm</location>
    </subcellularLocation>
</comment>
<comment type="similarity">
    <text evidence="1">Belongs to the LDH2/MDH2 oxidoreductase family. DlgD subfamily.</text>
</comment>
<accession>A1AHB7</accession>
<sequence>MKVTFEQLKAAFNRVLISRGVDNETADACAEMFARTTESGVYSHGVNRFPRFIQQLENGDIIPDAQPKRITSLGAIEQWDAQRSIGNLTAKKMMDRAIELAADHGIGLVALRNANHWMRGGSYGWQAAEKGYIGICWTNSIAVMPPWGAKECRIGTNPLIVAIPSTPITMVDMSMSMFSYGMLEVNRLAGRQLPVDGGFDDEGNLTKEPGVIEKNRRILPMGYWKGSGMSIVLDMIATLLSDGASVAEVTEDNSDEYGISQIFIAIEVDKLIDGPTRDAKLQRIMDYVTSAERADENQAIRLPGHEFTTLLAENRRNGITVDDSVWAKIQAL</sequence>
<feature type="chain" id="PRO_1000062441" description="2,3-diketo-L-gulonate reductase">
    <location>
        <begin position="1"/>
        <end position="332"/>
    </location>
</feature>
<feature type="active site" description="Proton donor" evidence="1">
    <location>
        <position position="44"/>
    </location>
</feature>
<feature type="binding site" evidence="1">
    <location>
        <begin position="168"/>
        <end position="174"/>
    </location>
    <ligand>
        <name>NAD(+)</name>
        <dbReference type="ChEBI" id="CHEBI:57540"/>
    </ligand>
</feature>
<feature type="binding site" evidence="1">
    <location>
        <begin position="224"/>
        <end position="225"/>
    </location>
    <ligand>
        <name>NAD(+)</name>
        <dbReference type="ChEBI" id="CHEBI:57540"/>
    </ligand>
</feature>
<feature type="binding site" evidence="1">
    <location>
        <begin position="304"/>
        <end position="306"/>
    </location>
    <ligand>
        <name>NAD(+)</name>
        <dbReference type="ChEBI" id="CHEBI:57540"/>
    </ligand>
</feature>
<reference key="1">
    <citation type="journal article" date="2007" name="J. Bacteriol.">
        <title>The genome sequence of avian pathogenic Escherichia coli strain O1:K1:H7 shares strong similarities with human extraintestinal pathogenic E. coli genomes.</title>
        <authorList>
            <person name="Johnson T.J."/>
            <person name="Kariyawasam S."/>
            <person name="Wannemuehler Y."/>
            <person name="Mangiamele P."/>
            <person name="Johnson S.J."/>
            <person name="Doetkott C."/>
            <person name="Skyberg J.A."/>
            <person name="Lynne A.M."/>
            <person name="Johnson J.R."/>
            <person name="Nolan L.K."/>
        </authorList>
    </citation>
    <scope>NUCLEOTIDE SEQUENCE [LARGE SCALE GENOMIC DNA]</scope>
</reference>
<organism>
    <name type="scientific">Escherichia coli O1:K1 / APEC</name>
    <dbReference type="NCBI Taxonomy" id="405955"/>
    <lineage>
        <taxon>Bacteria</taxon>
        <taxon>Pseudomonadati</taxon>
        <taxon>Pseudomonadota</taxon>
        <taxon>Gammaproteobacteria</taxon>
        <taxon>Enterobacterales</taxon>
        <taxon>Enterobacteriaceae</taxon>
        <taxon>Escherichia</taxon>
    </lineage>
</organism>
<gene>
    <name evidence="1" type="primary">dlgD</name>
    <name type="ordered locus">Ecok1_35630</name>
    <name type="ORF">APECO1_2875</name>
</gene>
<protein>
    <recommendedName>
        <fullName evidence="1">2,3-diketo-L-gulonate reductase</fullName>
        <shortName evidence="1">2,3-DKG reductase</shortName>
        <ecNumber evidence="1">1.1.1.130</ecNumber>
    </recommendedName>
    <alternativeName>
        <fullName evidence="1">3-dehydro-L-gulonate 2-dehydrogenase</fullName>
    </alternativeName>
</protein>
<evidence type="ECO:0000255" key="1">
    <source>
        <dbReference type="HAMAP-Rule" id="MF_00820"/>
    </source>
</evidence>
<keyword id="KW-0963">Cytoplasm</keyword>
<keyword id="KW-0520">NAD</keyword>
<keyword id="KW-0560">Oxidoreductase</keyword>
<keyword id="KW-1185">Reference proteome</keyword>
<name>DLGD_ECOK1</name>
<proteinExistence type="inferred from homology"/>